<proteinExistence type="evidence at transcript level"/>
<protein>
    <recommendedName>
        <fullName>Multidrug and toxin extrusion protein 1</fullName>
        <shortName>MATE-1</shortName>
    </recommendedName>
    <alternativeName>
        <fullName>Solute carrier family 47 member 1</fullName>
    </alternativeName>
</protein>
<keyword id="KW-0007">Acetylation</keyword>
<keyword id="KW-1003">Cell membrane</keyword>
<keyword id="KW-0472">Membrane</keyword>
<keyword id="KW-1185">Reference proteome</keyword>
<keyword id="KW-0812">Transmembrane</keyword>
<keyword id="KW-1133">Transmembrane helix</keyword>
<keyword id="KW-0813">Transport</keyword>
<sequence>MEAPEEPAPVRGGPEATLEIHGSRFLRLSAFREELRALLVLAGPAFLVQLMVFLISFISSVFCGHLGKLELDAVTLAIAVINVTGVSVGFGLSSACDTLISQTYGSQNLKHVGVILQRSALILLLCCFPCWALFLNTQHILLLFRQDPDVSRLTQTYVTIFIPALPATFLYMLQVKYLLNQGIVLPQIVTGVAANLVNALANYLFLHQLHLGAIGSALANLISQYTLALLLFFYILGKKLHQATWGGWSLECLQDWASFLHLAVPSMLMLCMEWWAYEVGSFLSGILGMVELGAQSIVYELAIIVYMVPAGFSVAASVRVGNALGAGDMEQARKSSTVSLLITVLFAVAFSVLLLSCKDHVGYIFTTDRDIINLVAQVVPIYAVSHLFEALACTSGGVLRGSGNQKVGAIVNTIGYYVVGLPIGIALMFATKLGVMGLWSGIIICTVFQAVCFLGFIIQLNWKKACQQAQVHANLKVNNVPRSGNSALPQDPLHPGCPENLEGILTNDVGKTGETQSDQQMRQEEPLPEHPQDSAKLSRKQLVLRRGLLLLGVFLILLVGILVRFYVRIQ</sequence>
<evidence type="ECO:0000250" key="1">
    <source>
        <dbReference type="UniProtKB" id="Q96FL8"/>
    </source>
</evidence>
<evidence type="ECO:0000255" key="2"/>
<evidence type="ECO:0000256" key="3">
    <source>
        <dbReference type="SAM" id="MobiDB-lite"/>
    </source>
</evidence>
<evidence type="ECO:0000305" key="4"/>
<name>S47A1_PONAB</name>
<reference key="1">
    <citation type="submission" date="2004-11" db="EMBL/GenBank/DDBJ databases">
        <authorList>
            <consortium name="The German cDNA consortium"/>
        </authorList>
    </citation>
    <scope>NUCLEOTIDE SEQUENCE [LARGE SCALE MRNA]</scope>
    <source>
        <tissue>Kidney</tissue>
    </source>
</reference>
<feature type="chain" id="PRO_0000312847" description="Multidrug and toxin extrusion protein 1">
    <location>
        <begin position="1"/>
        <end position="570"/>
    </location>
</feature>
<feature type="topological domain" description="Cytoplasmic" evidence="2">
    <location>
        <begin position="1"/>
        <end position="37"/>
    </location>
</feature>
<feature type="transmembrane region" description="Helical" evidence="2">
    <location>
        <begin position="38"/>
        <end position="58"/>
    </location>
</feature>
<feature type="topological domain" description="Extracellular" evidence="2">
    <location>
        <begin position="59"/>
        <end position="72"/>
    </location>
</feature>
<feature type="transmembrane region" description="Helical" evidence="2">
    <location>
        <begin position="73"/>
        <end position="93"/>
    </location>
</feature>
<feature type="topological domain" description="Cytoplasmic" evidence="2">
    <location>
        <begin position="94"/>
        <end position="120"/>
    </location>
</feature>
<feature type="transmembrane region" description="Helical" evidence="2">
    <location>
        <begin position="121"/>
        <end position="141"/>
    </location>
</feature>
<feature type="topological domain" description="Extracellular" evidence="2">
    <location>
        <begin position="142"/>
        <end position="152"/>
    </location>
</feature>
<feature type="transmembrane region" description="Helical" evidence="2">
    <location>
        <begin position="153"/>
        <end position="173"/>
    </location>
</feature>
<feature type="topological domain" description="Cytoplasmic" evidence="2">
    <location>
        <begin position="174"/>
        <end position="176"/>
    </location>
</feature>
<feature type="transmembrane region" description="Helical" evidence="2">
    <location>
        <begin position="177"/>
        <end position="197"/>
    </location>
</feature>
<feature type="topological domain" description="Extracellular" evidence="2">
    <location>
        <begin position="198"/>
        <end position="216"/>
    </location>
</feature>
<feature type="transmembrane region" description="Helical" evidence="2">
    <location>
        <begin position="217"/>
        <end position="237"/>
    </location>
</feature>
<feature type="topological domain" description="Cytoplasmic" evidence="2">
    <location>
        <begin position="238"/>
        <end position="251"/>
    </location>
</feature>
<feature type="transmembrane region" description="Helical" evidence="2">
    <location>
        <begin position="252"/>
        <end position="272"/>
    </location>
</feature>
<feature type="topological domain" description="Extracellular" evidence="2">
    <location>
        <begin position="273"/>
        <end position="295"/>
    </location>
</feature>
<feature type="transmembrane region" description="Helical" evidence="2">
    <location>
        <begin position="296"/>
        <end position="316"/>
    </location>
</feature>
<feature type="topological domain" description="Cytoplasmic" evidence="2">
    <location>
        <begin position="317"/>
        <end position="336"/>
    </location>
</feature>
<feature type="transmembrane region" description="Helical" evidence="2">
    <location>
        <begin position="337"/>
        <end position="357"/>
    </location>
</feature>
<feature type="topological domain" description="Extracellular" evidence="2">
    <location>
        <begin position="358"/>
        <end position="370"/>
    </location>
</feature>
<feature type="transmembrane region" description="Helical" evidence="2">
    <location>
        <begin position="371"/>
        <end position="391"/>
    </location>
</feature>
<feature type="topological domain" description="Cytoplasmic" evidence="2">
    <location>
        <begin position="392"/>
        <end position="408"/>
    </location>
</feature>
<feature type="transmembrane region" description="Helical" evidence="2">
    <location>
        <begin position="409"/>
        <end position="429"/>
    </location>
</feature>
<feature type="topological domain" description="Extracellular" evidence="2">
    <location>
        <begin position="430"/>
        <end position="437"/>
    </location>
</feature>
<feature type="transmembrane region" description="Helical" evidence="2">
    <location>
        <begin position="438"/>
        <end position="458"/>
    </location>
</feature>
<feature type="topological domain" description="Cytoplasmic" evidence="2">
    <location>
        <begin position="459"/>
        <end position="546"/>
    </location>
</feature>
<feature type="transmembrane region" description="Helical" evidence="2">
    <location>
        <begin position="547"/>
        <end position="567"/>
    </location>
</feature>
<feature type="topological domain" description="Extracellular" evidence="2">
    <location>
        <begin position="568"/>
        <end position="570"/>
    </location>
</feature>
<feature type="region of interest" description="Disordered" evidence="3">
    <location>
        <begin position="508"/>
        <end position="534"/>
    </location>
</feature>
<feature type="compositionally biased region" description="Basic and acidic residues" evidence="3">
    <location>
        <begin position="521"/>
        <end position="533"/>
    </location>
</feature>
<feature type="modified residue" description="N-acetylmethionine" evidence="1">
    <location>
        <position position="1"/>
    </location>
</feature>
<organism>
    <name type="scientific">Pongo abelii</name>
    <name type="common">Sumatran orangutan</name>
    <name type="synonym">Pongo pygmaeus abelii</name>
    <dbReference type="NCBI Taxonomy" id="9601"/>
    <lineage>
        <taxon>Eukaryota</taxon>
        <taxon>Metazoa</taxon>
        <taxon>Chordata</taxon>
        <taxon>Craniata</taxon>
        <taxon>Vertebrata</taxon>
        <taxon>Euteleostomi</taxon>
        <taxon>Mammalia</taxon>
        <taxon>Eutheria</taxon>
        <taxon>Euarchontoglires</taxon>
        <taxon>Primates</taxon>
        <taxon>Haplorrhini</taxon>
        <taxon>Catarrhini</taxon>
        <taxon>Hominidae</taxon>
        <taxon>Pongo</taxon>
    </lineage>
</organism>
<comment type="function">
    <text evidence="1">Multidrug efflux pump that functions as a H(+)/organic cation antiporter. Plays a physiological role in the excretion of cationic compounds including endogenous metabolites, drugs, toxins through the kidney and liver, into urine and bile respectively. Mediates the efflux of endogenous compounds such as creatinine, vitamin B1/thiamine, agmatine and estrone-3-sulfate. May also contribute to regulate the transport of cationic compounds in testis across the blood-testis-barrier.</text>
</comment>
<comment type="catalytic activity">
    <reaction evidence="1">
        <text>thiamine(out) + H(+)(in) = thiamine(in) + H(+)(out)</text>
        <dbReference type="Rhea" id="RHEA:71271"/>
        <dbReference type="ChEBI" id="CHEBI:15378"/>
        <dbReference type="ChEBI" id="CHEBI:18385"/>
    </reaction>
</comment>
<comment type="catalytic activity">
    <reaction evidence="1">
        <text>estrone 3-sulfate(in) + H(+)(out) = estrone 3-sulfate(out) + H(+)(in)</text>
        <dbReference type="Rhea" id="RHEA:72139"/>
        <dbReference type="ChEBI" id="CHEBI:15378"/>
        <dbReference type="ChEBI" id="CHEBI:60050"/>
    </reaction>
</comment>
<comment type="catalytic activity">
    <reaction evidence="1">
        <text>creatinine(in) + H(+)(out) = creatinine(out) + H(+)(in)</text>
        <dbReference type="Rhea" id="RHEA:72183"/>
        <dbReference type="ChEBI" id="CHEBI:15378"/>
        <dbReference type="ChEBI" id="CHEBI:16737"/>
    </reaction>
</comment>
<comment type="catalytic activity">
    <reaction evidence="1">
        <text>agmatine(in) + H(+)(out) = agmatine(out) + H(+)(in)</text>
        <dbReference type="Rhea" id="RHEA:72127"/>
        <dbReference type="ChEBI" id="CHEBI:15378"/>
        <dbReference type="ChEBI" id="CHEBI:58145"/>
    </reaction>
    <physiologicalReaction direction="left-to-right" evidence="1">
        <dbReference type="Rhea" id="RHEA:72128"/>
    </physiologicalReaction>
    <physiologicalReaction direction="right-to-left" evidence="1">
        <dbReference type="Rhea" id="RHEA:72129"/>
    </physiologicalReaction>
</comment>
<comment type="subcellular location">
    <subcellularLocation>
        <location evidence="1">Cell membrane</location>
        <topology evidence="2">Multi-pass membrane protein</topology>
    </subcellularLocation>
    <subcellularLocation>
        <location evidence="1">Apical cell membrane</location>
        <topology evidence="2">Multi-pass membrane protein</topology>
    </subcellularLocation>
    <text evidence="1">Localizes to the plasma membrane; at the brush border membranes of the proximal tubules (kidney) and at the bile caniculi (liver).</text>
</comment>
<comment type="miscellaneous">
    <text evidence="1">Mediates the efflux of cationic compounds such as the model cations, tetraethylammonium (TEA), the neurotoxin 1-methyl-4-phenylpyridinium (MPP), the platinum-based drugs cisplatin and oxaliplatin, the drugs procainamide, acyclovir and topotecan, or weak bases that are positively charged at physiological pH, such as cimetidine or the antidiabetic drug metformin.</text>
</comment>
<comment type="similarity">
    <text evidence="4">Belongs to the multi antimicrobial extrusion (MATE) (TC 2.A.66.1) family.</text>
</comment>
<accession>Q5RFD2</accession>
<dbReference type="EMBL" id="CR857226">
    <property type="protein sequence ID" value="CAH89525.1"/>
    <property type="molecule type" value="mRNA"/>
</dbReference>
<dbReference type="RefSeq" id="NP_001124662.1">
    <property type="nucleotide sequence ID" value="NM_001131190.2"/>
</dbReference>
<dbReference type="SMR" id="Q5RFD2"/>
<dbReference type="FunCoup" id="Q5RFD2">
    <property type="interactions" value="681"/>
</dbReference>
<dbReference type="STRING" id="9601.ENSPPYP00000009916"/>
<dbReference type="GeneID" id="100171505"/>
<dbReference type="KEGG" id="pon:100171505"/>
<dbReference type="CTD" id="55244"/>
<dbReference type="eggNOG" id="KOG1347">
    <property type="taxonomic scope" value="Eukaryota"/>
</dbReference>
<dbReference type="InParanoid" id="Q5RFD2"/>
<dbReference type="OrthoDB" id="2126698at2759"/>
<dbReference type="Proteomes" id="UP000001595">
    <property type="component" value="Unplaced"/>
</dbReference>
<dbReference type="GO" id="GO:0016324">
    <property type="term" value="C:apical plasma membrane"/>
    <property type="evidence" value="ECO:0000250"/>
    <property type="project" value="UniProtKB"/>
</dbReference>
<dbReference type="GO" id="GO:0015297">
    <property type="term" value="F:antiporter activity"/>
    <property type="evidence" value="ECO:0000250"/>
    <property type="project" value="UniProtKB"/>
</dbReference>
<dbReference type="GO" id="GO:0015101">
    <property type="term" value="F:organic cation transmembrane transporter activity"/>
    <property type="evidence" value="ECO:0000250"/>
    <property type="project" value="UniProtKB"/>
</dbReference>
<dbReference type="GO" id="GO:0015489">
    <property type="term" value="F:putrescine transmembrane transporter activity"/>
    <property type="evidence" value="ECO:0000250"/>
    <property type="project" value="UniProtKB"/>
</dbReference>
<dbReference type="GO" id="GO:0015234">
    <property type="term" value="F:thiamine transmembrane transporter activity"/>
    <property type="evidence" value="ECO:0000250"/>
    <property type="project" value="UniProtKB"/>
</dbReference>
<dbReference type="GO" id="GO:0042910">
    <property type="term" value="F:xenobiotic transmembrane transporter activity"/>
    <property type="evidence" value="ECO:0000250"/>
    <property type="project" value="UniProtKB"/>
</dbReference>
<dbReference type="GO" id="GO:0015695">
    <property type="term" value="P:organic cation transport"/>
    <property type="evidence" value="ECO:0000250"/>
    <property type="project" value="UniProtKB"/>
</dbReference>
<dbReference type="GO" id="GO:0015847">
    <property type="term" value="P:putrescine transport"/>
    <property type="evidence" value="ECO:0000250"/>
    <property type="project" value="UniProtKB"/>
</dbReference>
<dbReference type="GO" id="GO:1990961">
    <property type="term" value="P:xenobiotic detoxification by transmembrane export across the plasma membrane"/>
    <property type="evidence" value="ECO:0000250"/>
    <property type="project" value="UniProtKB"/>
</dbReference>
<dbReference type="CDD" id="cd13132">
    <property type="entry name" value="MATE_eukaryotic"/>
    <property type="match status" value="1"/>
</dbReference>
<dbReference type="InterPro" id="IPR045069">
    <property type="entry name" value="MATE_euk"/>
</dbReference>
<dbReference type="InterPro" id="IPR002528">
    <property type="entry name" value="MATE_fam"/>
</dbReference>
<dbReference type="NCBIfam" id="TIGR00797">
    <property type="entry name" value="matE"/>
    <property type="match status" value="1"/>
</dbReference>
<dbReference type="PANTHER" id="PTHR11206">
    <property type="entry name" value="MULTIDRUG RESISTANCE PROTEIN"/>
    <property type="match status" value="1"/>
</dbReference>
<dbReference type="Pfam" id="PF01554">
    <property type="entry name" value="MatE"/>
    <property type="match status" value="2"/>
</dbReference>
<gene>
    <name type="primary">SLC47A1</name>
    <name type="synonym">MATE1</name>
</gene>